<dbReference type="EMBL" id="CP000724">
    <property type="protein sequence ID" value="ABR50735.1"/>
    <property type="molecule type" value="Genomic_DNA"/>
</dbReference>
<dbReference type="SMR" id="A6TX17"/>
<dbReference type="KEGG" id="amt:Amet_4665"/>
<dbReference type="eggNOG" id="COG3681">
    <property type="taxonomic scope" value="Bacteria"/>
</dbReference>
<dbReference type="HOGENOM" id="CLU_051840_0_0_9"/>
<dbReference type="OrthoDB" id="41906at2"/>
<dbReference type="Proteomes" id="UP000001572">
    <property type="component" value="Chromosome"/>
</dbReference>
<dbReference type="GO" id="GO:0080146">
    <property type="term" value="F:L-cysteine desulfhydrase activity"/>
    <property type="evidence" value="ECO:0007669"/>
    <property type="project" value="TreeGrafter"/>
</dbReference>
<dbReference type="GO" id="GO:0019450">
    <property type="term" value="P:L-cysteine catabolic process to pyruvate"/>
    <property type="evidence" value="ECO:0007669"/>
    <property type="project" value="TreeGrafter"/>
</dbReference>
<dbReference type="HAMAP" id="MF_01845">
    <property type="entry name" value="UPF0597"/>
    <property type="match status" value="1"/>
</dbReference>
<dbReference type="InterPro" id="IPR005130">
    <property type="entry name" value="Ser_deHydtase-like_asu"/>
</dbReference>
<dbReference type="InterPro" id="IPR021144">
    <property type="entry name" value="UPF0597"/>
</dbReference>
<dbReference type="PANTHER" id="PTHR30501">
    <property type="entry name" value="UPF0597 PROTEIN YHAM"/>
    <property type="match status" value="1"/>
</dbReference>
<dbReference type="PANTHER" id="PTHR30501:SF2">
    <property type="entry name" value="UPF0597 PROTEIN YHAM"/>
    <property type="match status" value="1"/>
</dbReference>
<dbReference type="Pfam" id="PF03313">
    <property type="entry name" value="SDH_alpha"/>
    <property type="match status" value="1"/>
</dbReference>
<dbReference type="PIRSF" id="PIRSF006054">
    <property type="entry name" value="UCP006054"/>
    <property type="match status" value="1"/>
</dbReference>
<organism>
    <name type="scientific">Alkaliphilus metalliredigens (strain QYMF)</name>
    <dbReference type="NCBI Taxonomy" id="293826"/>
    <lineage>
        <taxon>Bacteria</taxon>
        <taxon>Bacillati</taxon>
        <taxon>Bacillota</taxon>
        <taxon>Clostridia</taxon>
        <taxon>Peptostreptococcales</taxon>
        <taxon>Natronincolaceae</taxon>
        <taxon>Alkaliphilus</taxon>
    </lineage>
</organism>
<reference key="1">
    <citation type="journal article" date="2016" name="Genome Announc.">
        <title>Complete genome sequence of Alkaliphilus metalliredigens strain QYMF, an alkaliphilic and metal-reducing bacterium isolated from borax-contaminated leachate ponds.</title>
        <authorList>
            <person name="Hwang C."/>
            <person name="Copeland A."/>
            <person name="Lucas S."/>
            <person name="Lapidus A."/>
            <person name="Barry K."/>
            <person name="Detter J.C."/>
            <person name="Glavina Del Rio T."/>
            <person name="Hammon N."/>
            <person name="Israni S."/>
            <person name="Dalin E."/>
            <person name="Tice H."/>
            <person name="Pitluck S."/>
            <person name="Chertkov O."/>
            <person name="Brettin T."/>
            <person name="Bruce D."/>
            <person name="Han C."/>
            <person name="Schmutz J."/>
            <person name="Larimer F."/>
            <person name="Land M.L."/>
            <person name="Hauser L."/>
            <person name="Kyrpides N."/>
            <person name="Mikhailova N."/>
            <person name="Ye Q."/>
            <person name="Zhou J."/>
            <person name="Richardson P."/>
            <person name="Fields M.W."/>
        </authorList>
    </citation>
    <scope>NUCLEOTIDE SEQUENCE [LARGE SCALE GENOMIC DNA]</scope>
    <source>
        <strain>QYMF</strain>
    </source>
</reference>
<protein>
    <recommendedName>
        <fullName evidence="1">UPF0597 protein Amet_4665</fullName>
    </recommendedName>
</protein>
<sequence length="447" mass="47963">MKRLILETLKAEVVPAIGCTEPIAVALACAKAREIAGVSIDEVDHVDVIVSPNVYKNGLAVGVPHTEHIGLAIAAALGLTGGKCHQGLQVLEGMKKTEQDIAVSLMDQGLISLDIKDTNEKVYIEVILSIQGWKAKVIIKERHNQFVYLEKQGHVLLDSKTVPGVIASHQNPLYHMEIKEIIAIIEQIPHEELAFMMDGVEMNKKMAMTGLQPGVGMGVGYTYYDNMKKGILSDDIMNQAMMLTAAASDARMSGSILPVMSSNGSGNNGITAILPIVAYGMKFQVEDEKMAKALAISHLMNSYIKHYIGRLSALCGCGVAAGTGASVAIAWLMGAKEQQIDGVIKNMLANVSGMICDGAKVGCALKLATSAQVAIQSALLAMDHHIVPTGNGIVAETAEGTIENLRILSEEGMQLTDHAILSVMMKFQRARESHIKDDVLTHEKYVV</sequence>
<accession>A6TX17</accession>
<comment type="similarity">
    <text evidence="1">Belongs to the UPF0597 family.</text>
</comment>
<evidence type="ECO:0000255" key="1">
    <source>
        <dbReference type="HAMAP-Rule" id="MF_01845"/>
    </source>
</evidence>
<gene>
    <name type="ordered locus">Amet_4665</name>
</gene>
<feature type="chain" id="PRO_0000339783" description="UPF0597 protein Amet_4665">
    <location>
        <begin position="1"/>
        <end position="447"/>
    </location>
</feature>
<name>Y4665_ALKMQ</name>
<proteinExistence type="inferred from homology"/>
<keyword id="KW-1185">Reference proteome</keyword>